<accession>Q0K6I1</accession>
<sequence>MITPQEALTRCIEHREIFHDEMLHLMRQIMQGQISPVMAAAILTGLRVKKETIGEISAAAQVMREFANKVPVADRENFVDIVGTGGDGSHTFNISTASMFVAAAAGAKIAKHGNRGVSSKSGSADVLEALGVNIMLTPEQVGQCIEETGIGFMFAPTHHPAMKNVAPIRKEMGVRTIFNILGPLTNPADAPNILMGVFHPDLVGIQVRVMQRLGAKHAIVVYGKDGMDEVSLGAATLVGELKDGEVREYEIHPEDFGLQMISNRGLKVADATESKEMLLEALTNVPGTPREIVSLNAGTALYAANVADSVEDGIRRAREAIASGAAQEKLDQFVRATQQFK</sequence>
<proteinExistence type="inferred from homology"/>
<evidence type="ECO:0000255" key="1">
    <source>
        <dbReference type="HAMAP-Rule" id="MF_00211"/>
    </source>
</evidence>
<evidence type="ECO:0000305" key="2"/>
<protein>
    <recommendedName>
        <fullName evidence="1">Anthranilate phosphoribosyltransferase</fullName>
        <ecNumber evidence="1">2.4.2.18</ecNumber>
    </recommendedName>
</protein>
<comment type="function">
    <text evidence="1">Catalyzes the transfer of the phosphoribosyl group of 5-phosphorylribose-1-pyrophosphate (PRPP) to anthranilate to yield N-(5'-phosphoribosyl)-anthranilate (PRA).</text>
</comment>
<comment type="catalytic activity">
    <reaction evidence="1">
        <text>N-(5-phospho-beta-D-ribosyl)anthranilate + diphosphate = 5-phospho-alpha-D-ribose 1-diphosphate + anthranilate</text>
        <dbReference type="Rhea" id="RHEA:11768"/>
        <dbReference type="ChEBI" id="CHEBI:16567"/>
        <dbReference type="ChEBI" id="CHEBI:18277"/>
        <dbReference type="ChEBI" id="CHEBI:33019"/>
        <dbReference type="ChEBI" id="CHEBI:58017"/>
        <dbReference type="EC" id="2.4.2.18"/>
    </reaction>
</comment>
<comment type="cofactor">
    <cofactor evidence="1">
        <name>Mg(2+)</name>
        <dbReference type="ChEBI" id="CHEBI:18420"/>
    </cofactor>
    <text evidence="1">Binds 2 magnesium ions per monomer.</text>
</comment>
<comment type="pathway">
    <text evidence="1">Amino-acid biosynthesis; L-tryptophan biosynthesis; L-tryptophan from chorismate: step 2/5.</text>
</comment>
<comment type="subunit">
    <text evidence="1">Homodimer.</text>
</comment>
<comment type="similarity">
    <text evidence="1">Belongs to the anthranilate phosphoribosyltransferase family.</text>
</comment>
<comment type="sequence caution" evidence="2">
    <conflict type="erroneous initiation">
        <sequence resource="EMBL-CDS" id="CAJ94390"/>
    </conflict>
    <text>Extended N-terminus.</text>
</comment>
<feature type="chain" id="PRO_0000325452" description="Anthranilate phosphoribosyltransferase">
    <location>
        <begin position="1"/>
        <end position="341"/>
    </location>
</feature>
<feature type="binding site" evidence="1">
    <location>
        <position position="83"/>
    </location>
    <ligand>
        <name>5-phospho-alpha-D-ribose 1-diphosphate</name>
        <dbReference type="ChEBI" id="CHEBI:58017"/>
    </ligand>
</feature>
<feature type="binding site" evidence="1">
    <location>
        <position position="83"/>
    </location>
    <ligand>
        <name>anthranilate</name>
        <dbReference type="ChEBI" id="CHEBI:16567"/>
        <label>1</label>
    </ligand>
</feature>
<feature type="binding site" evidence="1">
    <location>
        <begin position="86"/>
        <end position="87"/>
    </location>
    <ligand>
        <name>5-phospho-alpha-D-ribose 1-diphosphate</name>
        <dbReference type="ChEBI" id="CHEBI:58017"/>
    </ligand>
</feature>
<feature type="binding site" evidence="1">
    <location>
        <position position="91"/>
    </location>
    <ligand>
        <name>5-phospho-alpha-D-ribose 1-diphosphate</name>
        <dbReference type="ChEBI" id="CHEBI:58017"/>
    </ligand>
</feature>
<feature type="binding site" evidence="1">
    <location>
        <begin position="93"/>
        <end position="96"/>
    </location>
    <ligand>
        <name>5-phospho-alpha-D-ribose 1-diphosphate</name>
        <dbReference type="ChEBI" id="CHEBI:58017"/>
    </ligand>
</feature>
<feature type="binding site" evidence="1">
    <location>
        <position position="95"/>
    </location>
    <ligand>
        <name>Mg(2+)</name>
        <dbReference type="ChEBI" id="CHEBI:18420"/>
        <label>1</label>
    </ligand>
</feature>
<feature type="binding site" evidence="1">
    <location>
        <begin position="111"/>
        <end position="119"/>
    </location>
    <ligand>
        <name>5-phospho-alpha-D-ribose 1-diphosphate</name>
        <dbReference type="ChEBI" id="CHEBI:58017"/>
    </ligand>
</feature>
<feature type="binding site" evidence="1">
    <location>
        <position position="114"/>
    </location>
    <ligand>
        <name>anthranilate</name>
        <dbReference type="ChEBI" id="CHEBI:16567"/>
        <label>1</label>
    </ligand>
</feature>
<feature type="binding site" evidence="1">
    <location>
        <position position="123"/>
    </location>
    <ligand>
        <name>5-phospho-alpha-D-ribose 1-diphosphate</name>
        <dbReference type="ChEBI" id="CHEBI:58017"/>
    </ligand>
</feature>
<feature type="binding site" evidence="1">
    <location>
        <position position="169"/>
    </location>
    <ligand>
        <name>anthranilate</name>
        <dbReference type="ChEBI" id="CHEBI:16567"/>
        <label>2</label>
    </ligand>
</feature>
<feature type="binding site" evidence="1">
    <location>
        <position position="228"/>
    </location>
    <ligand>
        <name>Mg(2+)</name>
        <dbReference type="ChEBI" id="CHEBI:18420"/>
        <label>2</label>
    </ligand>
</feature>
<feature type="binding site" evidence="1">
    <location>
        <position position="229"/>
    </location>
    <ligand>
        <name>Mg(2+)</name>
        <dbReference type="ChEBI" id="CHEBI:18420"/>
        <label>1</label>
    </ligand>
</feature>
<feature type="binding site" evidence="1">
    <location>
        <position position="229"/>
    </location>
    <ligand>
        <name>Mg(2+)</name>
        <dbReference type="ChEBI" id="CHEBI:18420"/>
        <label>2</label>
    </ligand>
</feature>
<dbReference type="EC" id="2.4.2.18" evidence="1"/>
<dbReference type="EMBL" id="AM260479">
    <property type="protein sequence ID" value="CAJ94390.1"/>
    <property type="status" value="ALT_INIT"/>
    <property type="molecule type" value="Genomic_DNA"/>
</dbReference>
<dbReference type="SMR" id="Q0K6I1"/>
<dbReference type="STRING" id="381666.H16_A3321"/>
<dbReference type="KEGG" id="reh:H16_A3321"/>
<dbReference type="eggNOG" id="COG0547">
    <property type="taxonomic scope" value="Bacteria"/>
</dbReference>
<dbReference type="HOGENOM" id="CLU_034315_2_1_4"/>
<dbReference type="OrthoDB" id="9806430at2"/>
<dbReference type="UniPathway" id="UPA00035">
    <property type="reaction ID" value="UER00041"/>
</dbReference>
<dbReference type="Proteomes" id="UP000008210">
    <property type="component" value="Chromosome 1"/>
</dbReference>
<dbReference type="GO" id="GO:0005829">
    <property type="term" value="C:cytosol"/>
    <property type="evidence" value="ECO:0007669"/>
    <property type="project" value="TreeGrafter"/>
</dbReference>
<dbReference type="GO" id="GO:0004048">
    <property type="term" value="F:anthranilate phosphoribosyltransferase activity"/>
    <property type="evidence" value="ECO:0007669"/>
    <property type="project" value="UniProtKB-UniRule"/>
</dbReference>
<dbReference type="GO" id="GO:0000287">
    <property type="term" value="F:magnesium ion binding"/>
    <property type="evidence" value="ECO:0007669"/>
    <property type="project" value="UniProtKB-UniRule"/>
</dbReference>
<dbReference type="GO" id="GO:0000162">
    <property type="term" value="P:L-tryptophan biosynthetic process"/>
    <property type="evidence" value="ECO:0007669"/>
    <property type="project" value="UniProtKB-UniRule"/>
</dbReference>
<dbReference type="FunFam" id="1.20.970.10:FF:000006">
    <property type="entry name" value="Anthranilate phosphoribosyltransferase"/>
    <property type="match status" value="1"/>
</dbReference>
<dbReference type="FunFam" id="3.40.1030.10:FF:000002">
    <property type="entry name" value="Anthranilate phosphoribosyltransferase"/>
    <property type="match status" value="1"/>
</dbReference>
<dbReference type="Gene3D" id="3.40.1030.10">
    <property type="entry name" value="Nucleoside phosphorylase/phosphoribosyltransferase catalytic domain"/>
    <property type="match status" value="1"/>
</dbReference>
<dbReference type="Gene3D" id="1.20.970.10">
    <property type="entry name" value="Transferase, Pyrimidine Nucleoside Phosphorylase, Chain C"/>
    <property type="match status" value="1"/>
</dbReference>
<dbReference type="HAMAP" id="MF_00211">
    <property type="entry name" value="TrpD"/>
    <property type="match status" value="1"/>
</dbReference>
<dbReference type="InterPro" id="IPR005940">
    <property type="entry name" value="Anthranilate_Pribosyl_Tfrase"/>
</dbReference>
<dbReference type="InterPro" id="IPR000312">
    <property type="entry name" value="Glycosyl_Trfase_fam3"/>
</dbReference>
<dbReference type="InterPro" id="IPR017459">
    <property type="entry name" value="Glycosyl_Trfase_fam3_N_dom"/>
</dbReference>
<dbReference type="InterPro" id="IPR036320">
    <property type="entry name" value="Glycosyl_Trfase_fam3_N_dom_sf"/>
</dbReference>
<dbReference type="InterPro" id="IPR035902">
    <property type="entry name" value="Nuc_phospho_transferase"/>
</dbReference>
<dbReference type="NCBIfam" id="TIGR01245">
    <property type="entry name" value="trpD"/>
    <property type="match status" value="1"/>
</dbReference>
<dbReference type="PANTHER" id="PTHR43285">
    <property type="entry name" value="ANTHRANILATE PHOSPHORIBOSYLTRANSFERASE"/>
    <property type="match status" value="1"/>
</dbReference>
<dbReference type="PANTHER" id="PTHR43285:SF2">
    <property type="entry name" value="ANTHRANILATE PHOSPHORIBOSYLTRANSFERASE"/>
    <property type="match status" value="1"/>
</dbReference>
<dbReference type="Pfam" id="PF02885">
    <property type="entry name" value="Glycos_trans_3N"/>
    <property type="match status" value="1"/>
</dbReference>
<dbReference type="Pfam" id="PF00591">
    <property type="entry name" value="Glycos_transf_3"/>
    <property type="match status" value="1"/>
</dbReference>
<dbReference type="SUPFAM" id="SSF52418">
    <property type="entry name" value="Nucleoside phosphorylase/phosphoribosyltransferase catalytic domain"/>
    <property type="match status" value="1"/>
</dbReference>
<dbReference type="SUPFAM" id="SSF47648">
    <property type="entry name" value="Nucleoside phosphorylase/phosphoribosyltransferase N-terminal domain"/>
    <property type="match status" value="1"/>
</dbReference>
<keyword id="KW-0028">Amino-acid biosynthesis</keyword>
<keyword id="KW-0057">Aromatic amino acid biosynthesis</keyword>
<keyword id="KW-0328">Glycosyltransferase</keyword>
<keyword id="KW-0460">Magnesium</keyword>
<keyword id="KW-0479">Metal-binding</keyword>
<keyword id="KW-1185">Reference proteome</keyword>
<keyword id="KW-0808">Transferase</keyword>
<keyword id="KW-0822">Tryptophan biosynthesis</keyword>
<gene>
    <name evidence="1" type="primary">trpD</name>
    <name type="ordered locus">H16_A3321</name>
</gene>
<organism>
    <name type="scientific">Cupriavidus necator (strain ATCC 17699 / DSM 428 / KCTC 22496 / NCIMB 10442 / H16 / Stanier 337)</name>
    <name type="common">Ralstonia eutropha</name>
    <dbReference type="NCBI Taxonomy" id="381666"/>
    <lineage>
        <taxon>Bacteria</taxon>
        <taxon>Pseudomonadati</taxon>
        <taxon>Pseudomonadota</taxon>
        <taxon>Betaproteobacteria</taxon>
        <taxon>Burkholderiales</taxon>
        <taxon>Burkholderiaceae</taxon>
        <taxon>Cupriavidus</taxon>
    </lineage>
</organism>
<reference key="1">
    <citation type="journal article" date="2006" name="Nat. Biotechnol.">
        <title>Genome sequence of the bioplastic-producing 'Knallgas' bacterium Ralstonia eutropha H16.</title>
        <authorList>
            <person name="Pohlmann A."/>
            <person name="Fricke W.F."/>
            <person name="Reinecke F."/>
            <person name="Kusian B."/>
            <person name="Liesegang H."/>
            <person name="Cramm R."/>
            <person name="Eitinger T."/>
            <person name="Ewering C."/>
            <person name="Poetter M."/>
            <person name="Schwartz E."/>
            <person name="Strittmatter A."/>
            <person name="Voss I."/>
            <person name="Gottschalk G."/>
            <person name="Steinbuechel A."/>
            <person name="Friedrich B."/>
            <person name="Bowien B."/>
        </authorList>
    </citation>
    <scope>NUCLEOTIDE SEQUENCE [LARGE SCALE GENOMIC DNA]</scope>
    <source>
        <strain>ATCC 17699 / DSM 428 / KCTC 22496 / NCIMB 10442 / H16 / Stanier 337</strain>
    </source>
</reference>
<name>TRPD_CUPNH</name>